<accession>Q197D3</accession>
<gene>
    <name type="ORF">IIV3-027R</name>
</gene>
<reference key="1">
    <citation type="journal article" date="2006" name="J. Virol.">
        <title>Genome of invertebrate iridescent virus type 3 (mosquito iridescent virus).</title>
        <authorList>
            <person name="Delhon G."/>
            <person name="Tulman E.R."/>
            <person name="Afonso C.L."/>
            <person name="Lu Z."/>
            <person name="Becnel J.J."/>
            <person name="Moser B.A."/>
            <person name="Kutish G.F."/>
            <person name="Rock D.L."/>
        </authorList>
    </citation>
    <scope>NUCLEOTIDE SEQUENCE [LARGE SCALE GENOMIC DNA]</scope>
</reference>
<keyword id="KW-0479">Metal-binding</keyword>
<keyword id="KW-1185">Reference proteome</keyword>
<keyword id="KW-0862">Zinc</keyword>
<keyword id="KW-0863">Zinc-finger</keyword>
<organismHost>
    <name type="scientific">Aedes vexans</name>
    <name type="common">Inland floodwater mosquito</name>
    <name type="synonym">Culex vexans</name>
    <dbReference type="NCBI Taxonomy" id="7163"/>
</organismHost>
<organismHost>
    <name type="scientific">Culex territans</name>
    <dbReference type="NCBI Taxonomy" id="42431"/>
</organismHost>
<organismHost>
    <name type="scientific">Culiseta annulata</name>
    <dbReference type="NCBI Taxonomy" id="332058"/>
</organismHost>
<organismHost>
    <name type="scientific">Ochlerotatus sollicitans</name>
    <name type="common">eastern saltmarsh mosquito</name>
    <dbReference type="NCBI Taxonomy" id="310513"/>
</organismHost>
<organismHost>
    <name type="scientific">Ochlerotatus taeniorhynchus</name>
    <name type="common">Black salt marsh mosquito</name>
    <name type="synonym">Aedes taeniorhynchus</name>
    <dbReference type="NCBI Taxonomy" id="329105"/>
</organismHost>
<organismHost>
    <name type="scientific">Psorophora ferox</name>
    <dbReference type="NCBI Taxonomy" id="7183"/>
</organismHost>
<organism>
    <name type="scientific">Invertebrate iridescent virus 3</name>
    <name type="common">IIV-3</name>
    <name type="synonym">Mosquito iridescent virus</name>
    <dbReference type="NCBI Taxonomy" id="345201"/>
    <lineage>
        <taxon>Viruses</taxon>
        <taxon>Varidnaviria</taxon>
        <taxon>Bamfordvirae</taxon>
        <taxon>Nucleocytoviricota</taxon>
        <taxon>Megaviricetes</taxon>
        <taxon>Pimascovirales</taxon>
        <taxon>Iridoviridae</taxon>
        <taxon>Betairidovirinae</taxon>
        <taxon>Chloriridovirus</taxon>
    </lineage>
</organism>
<feature type="chain" id="PRO_0000377903" description="Putative RING finger protein 027R">
    <location>
        <begin position="1"/>
        <end position="171"/>
    </location>
</feature>
<feature type="zinc finger region" description="RING-type" evidence="1">
    <location>
        <begin position="121"/>
        <end position="163"/>
    </location>
</feature>
<comment type="similarity">
    <text evidence="2">Belongs to the IIV-6 157L family.</text>
</comment>
<dbReference type="EMBL" id="DQ643392">
    <property type="protein sequence ID" value="ABF82057.1"/>
    <property type="molecule type" value="Genomic_DNA"/>
</dbReference>
<dbReference type="RefSeq" id="YP_654599.1">
    <property type="nucleotide sequence ID" value="NC_008187.1"/>
</dbReference>
<dbReference type="KEGG" id="vg:4156277"/>
<dbReference type="OrthoDB" id="28917at10239"/>
<dbReference type="Proteomes" id="UP000001358">
    <property type="component" value="Genome"/>
</dbReference>
<dbReference type="GO" id="GO:0008270">
    <property type="term" value="F:zinc ion binding"/>
    <property type="evidence" value="ECO:0007669"/>
    <property type="project" value="UniProtKB-KW"/>
</dbReference>
<dbReference type="Gene3D" id="3.30.40.10">
    <property type="entry name" value="Zinc/RING finger domain, C3HC4 (zinc finger)"/>
    <property type="match status" value="1"/>
</dbReference>
<dbReference type="InterPro" id="IPR001841">
    <property type="entry name" value="Znf_RING"/>
</dbReference>
<dbReference type="InterPro" id="IPR013083">
    <property type="entry name" value="Znf_RING/FYVE/PHD"/>
</dbReference>
<dbReference type="Pfam" id="PF13920">
    <property type="entry name" value="zf-C3HC4_3"/>
    <property type="match status" value="1"/>
</dbReference>
<dbReference type="SUPFAM" id="SSF57850">
    <property type="entry name" value="RING/U-box"/>
    <property type="match status" value="1"/>
</dbReference>
<dbReference type="PROSITE" id="PS50089">
    <property type="entry name" value="ZF_RING_2"/>
    <property type="match status" value="1"/>
</dbReference>
<proteinExistence type="inferred from homology"/>
<protein>
    <recommendedName>
        <fullName>Putative RING finger protein 027R</fullName>
    </recommendedName>
</protein>
<evidence type="ECO:0000255" key="1">
    <source>
        <dbReference type="PROSITE-ProRule" id="PRU00175"/>
    </source>
</evidence>
<evidence type="ECO:0000305" key="2"/>
<name>VF157_IIV3</name>
<sequence>MNPTSADFVIPPALETAKPFGETEMYRILCDMEKIVPTKHNLNRVKNMSPFWKGDERSYNWFLDFVKSEWGEWIERYARGSHSLSPVTRKNGSPFQMVQAELWSLIHKPTWISSGFISPTCAVCMTNPVWVDFVWSCKHISTCIKCLKMLSRGSNGFKCPICRCQQRVRNY</sequence>